<comment type="function">
    <text evidence="1">Catalyzes the transfer of the cytidylyl group of CTP to D-ribitol 5-phosphate.</text>
</comment>
<comment type="catalytic activity">
    <reaction evidence="1">
        <text>D-ribitol 5-phosphate + CTP + H(+) = CDP-L-ribitol + diphosphate</text>
        <dbReference type="Rhea" id="RHEA:12456"/>
        <dbReference type="ChEBI" id="CHEBI:15378"/>
        <dbReference type="ChEBI" id="CHEBI:33019"/>
        <dbReference type="ChEBI" id="CHEBI:37563"/>
        <dbReference type="ChEBI" id="CHEBI:57608"/>
        <dbReference type="ChEBI" id="CHEBI:57695"/>
        <dbReference type="EC" id="2.7.7.40"/>
    </reaction>
</comment>
<comment type="pathway">
    <text evidence="1">Cell wall biogenesis; poly(ribitol phosphate) teichoic acid biosynthesis.</text>
</comment>
<comment type="similarity">
    <text evidence="1">Belongs to the IspD/TarI cytidylyltransferase family. TarI subfamily.</text>
</comment>
<reference key="1">
    <citation type="journal article" date="2001" name="Science">
        <title>Comparative genomics of Listeria species.</title>
        <authorList>
            <person name="Glaser P."/>
            <person name="Frangeul L."/>
            <person name="Buchrieser C."/>
            <person name="Rusniok C."/>
            <person name="Amend A."/>
            <person name="Baquero F."/>
            <person name="Berche P."/>
            <person name="Bloecker H."/>
            <person name="Brandt P."/>
            <person name="Chakraborty T."/>
            <person name="Charbit A."/>
            <person name="Chetouani F."/>
            <person name="Couve E."/>
            <person name="de Daruvar A."/>
            <person name="Dehoux P."/>
            <person name="Domann E."/>
            <person name="Dominguez-Bernal G."/>
            <person name="Duchaud E."/>
            <person name="Durant L."/>
            <person name="Dussurget O."/>
            <person name="Entian K.-D."/>
            <person name="Fsihi H."/>
            <person name="Garcia-del Portillo F."/>
            <person name="Garrido P."/>
            <person name="Gautier L."/>
            <person name="Goebel W."/>
            <person name="Gomez-Lopez N."/>
            <person name="Hain T."/>
            <person name="Hauf J."/>
            <person name="Jackson D."/>
            <person name="Jones L.-M."/>
            <person name="Kaerst U."/>
            <person name="Kreft J."/>
            <person name="Kuhn M."/>
            <person name="Kunst F."/>
            <person name="Kurapkat G."/>
            <person name="Madueno E."/>
            <person name="Maitournam A."/>
            <person name="Mata Vicente J."/>
            <person name="Ng E."/>
            <person name="Nedjari H."/>
            <person name="Nordsiek G."/>
            <person name="Novella S."/>
            <person name="de Pablos B."/>
            <person name="Perez-Diaz J.-C."/>
            <person name="Purcell R."/>
            <person name="Remmel B."/>
            <person name="Rose M."/>
            <person name="Schlueter T."/>
            <person name="Simoes N."/>
            <person name="Tierrez A."/>
            <person name="Vazquez-Boland J.-A."/>
            <person name="Voss H."/>
            <person name="Wehland J."/>
            <person name="Cossart P."/>
        </authorList>
    </citation>
    <scope>NUCLEOTIDE SEQUENCE [LARGE SCALE GENOMIC DNA]</scope>
    <source>
        <strain>ATCC BAA-679 / EGD-e</strain>
    </source>
</reference>
<proteinExistence type="inferred from homology"/>
<sequence>MIYAEILAGGKGTRMGNVNMPKQYLPLKGKPIIVHTIEKFILNDRFEKIIIATPKDWINHTQDIIKKYIFDSRVIVIEGGTDRNETIMNGIRYVEKEFGLNEDDIIVTHDAVRPFITHRIIEENIDMALEFGSVDTVIPAVDTIVESTNHDFITDIPVRGNIYQGQTPQSFNMKTIQKHYNNLTDDEKQILTDACKICLLAGEKVKLVNGGISNIKITTPYDLKVANAIVQERINS</sequence>
<keyword id="KW-0961">Cell wall biogenesis/degradation</keyword>
<keyword id="KW-0548">Nucleotidyltransferase</keyword>
<keyword id="KW-1185">Reference proteome</keyword>
<keyword id="KW-0777">Teichoic acid biosynthesis</keyword>
<keyword id="KW-0808">Transferase</keyword>
<feature type="chain" id="PRO_0000075588" description="Ribitol-5-phosphate cytidylyltransferase">
    <location>
        <begin position="1"/>
        <end position="236"/>
    </location>
</feature>
<feature type="binding site" evidence="1">
    <location>
        <begin position="7"/>
        <end position="10"/>
    </location>
    <ligand>
        <name>CTP</name>
        <dbReference type="ChEBI" id="CHEBI:37563"/>
    </ligand>
</feature>
<feature type="binding site" evidence="1">
    <location>
        <begin position="80"/>
        <end position="86"/>
    </location>
    <ligand>
        <name>CTP</name>
        <dbReference type="ChEBI" id="CHEBI:37563"/>
    </ligand>
</feature>
<feature type="site" description="Transition state stabilizer" evidence="1">
    <location>
        <position position="14"/>
    </location>
</feature>
<feature type="site" description="Transition state stabilizer" evidence="1">
    <location>
        <position position="22"/>
    </location>
</feature>
<feature type="site" description="Positions ribitol 5-phosphate for the nucleophilic attack" evidence="1">
    <location>
        <position position="159"/>
    </location>
</feature>
<feature type="site" description="Positions ribitol 5-phosphate for the nucleophilic attack" evidence="1">
    <location>
        <position position="216"/>
    </location>
</feature>
<name>TARI_LISMO</name>
<dbReference type="EC" id="2.7.7.40" evidence="1"/>
<dbReference type="EMBL" id="AL591977">
    <property type="protein sequence ID" value="CAC99164.1"/>
    <property type="molecule type" value="Genomic_DNA"/>
</dbReference>
<dbReference type="PIR" id="AF1210">
    <property type="entry name" value="AF1210"/>
</dbReference>
<dbReference type="RefSeq" id="WP_003721503.1">
    <property type="nucleotide sequence ID" value="NZ_CP149495.1"/>
</dbReference>
<dbReference type="SMR" id="Q8Y832"/>
<dbReference type="STRING" id="169963.gene:17593742"/>
<dbReference type="PaxDb" id="169963-lmo1086"/>
<dbReference type="EnsemblBacteria" id="CAC99164">
    <property type="protein sequence ID" value="CAC99164"/>
    <property type="gene ID" value="CAC99164"/>
</dbReference>
<dbReference type="KEGG" id="lmo:lmo1086"/>
<dbReference type="PATRIC" id="fig|169963.11.peg.1116"/>
<dbReference type="eggNOG" id="COG1211">
    <property type="taxonomic scope" value="Bacteria"/>
</dbReference>
<dbReference type="HOGENOM" id="CLU_061281_2_3_9"/>
<dbReference type="OrthoDB" id="9806837at2"/>
<dbReference type="PhylomeDB" id="Q8Y832"/>
<dbReference type="BioCyc" id="LMON169963:LMO1086-MONOMER"/>
<dbReference type="UniPathway" id="UPA00790"/>
<dbReference type="Proteomes" id="UP000000817">
    <property type="component" value="Chromosome"/>
</dbReference>
<dbReference type="GO" id="GO:0050518">
    <property type="term" value="F:2-C-methyl-D-erythritol 4-phosphate cytidylyltransferase activity"/>
    <property type="evidence" value="ECO:0000318"/>
    <property type="project" value="GO_Central"/>
</dbReference>
<dbReference type="GO" id="GO:0047349">
    <property type="term" value="F:D-ribitol-5-phosphate cytidylyltransferase activity"/>
    <property type="evidence" value="ECO:0007669"/>
    <property type="project" value="UniProtKB-UniRule"/>
</dbReference>
<dbReference type="GO" id="GO:0071555">
    <property type="term" value="P:cell wall organization"/>
    <property type="evidence" value="ECO:0007669"/>
    <property type="project" value="UniProtKB-KW"/>
</dbReference>
<dbReference type="GO" id="GO:0008299">
    <property type="term" value="P:isoprenoid biosynthetic process"/>
    <property type="evidence" value="ECO:0007669"/>
    <property type="project" value="InterPro"/>
</dbReference>
<dbReference type="GO" id="GO:1902012">
    <property type="term" value="P:poly(ribitol phosphate) teichoic acid biosynthetic process"/>
    <property type="evidence" value="ECO:0007669"/>
    <property type="project" value="UniProtKB-UniRule"/>
</dbReference>
<dbReference type="CDD" id="cd02516">
    <property type="entry name" value="CDP-ME_synthetase"/>
    <property type="match status" value="1"/>
</dbReference>
<dbReference type="FunFam" id="3.90.550.10:FF:000003">
    <property type="entry name" value="2-C-methyl-D-erythritol 4-phosphate cytidylyltransferase"/>
    <property type="match status" value="1"/>
</dbReference>
<dbReference type="Gene3D" id="3.90.550.10">
    <property type="entry name" value="Spore Coat Polysaccharide Biosynthesis Protein SpsA, Chain A"/>
    <property type="match status" value="1"/>
</dbReference>
<dbReference type="HAMAP" id="MF_02068">
    <property type="entry name" value="TarI"/>
    <property type="match status" value="1"/>
</dbReference>
<dbReference type="InterPro" id="IPR034683">
    <property type="entry name" value="IspD/TarI"/>
</dbReference>
<dbReference type="InterPro" id="IPR050088">
    <property type="entry name" value="IspD/TarI_cytidylyltransf_bact"/>
</dbReference>
<dbReference type="InterPro" id="IPR018294">
    <property type="entry name" value="ISPD_synthase_CS"/>
</dbReference>
<dbReference type="InterPro" id="IPR029044">
    <property type="entry name" value="Nucleotide-diphossugar_trans"/>
</dbReference>
<dbReference type="InterPro" id="IPR034709">
    <property type="entry name" value="TarI"/>
</dbReference>
<dbReference type="NCBIfam" id="NF001183">
    <property type="entry name" value="PRK00155.1-3"/>
    <property type="match status" value="1"/>
</dbReference>
<dbReference type="PANTHER" id="PTHR32125">
    <property type="entry name" value="2-C-METHYL-D-ERYTHRITOL 4-PHOSPHATE CYTIDYLYLTRANSFERASE, CHLOROPLASTIC"/>
    <property type="match status" value="1"/>
</dbReference>
<dbReference type="PANTHER" id="PTHR32125:SF8">
    <property type="entry name" value="RIBITOL-5-PHOSPHATE CYTIDYLYLTRANSFERASE"/>
    <property type="match status" value="1"/>
</dbReference>
<dbReference type="Pfam" id="PF01128">
    <property type="entry name" value="IspD"/>
    <property type="match status" value="1"/>
</dbReference>
<dbReference type="SUPFAM" id="SSF53448">
    <property type="entry name" value="Nucleotide-diphospho-sugar transferases"/>
    <property type="match status" value="1"/>
</dbReference>
<dbReference type="PROSITE" id="PS01295">
    <property type="entry name" value="ISPD"/>
    <property type="match status" value="1"/>
</dbReference>
<evidence type="ECO:0000255" key="1">
    <source>
        <dbReference type="HAMAP-Rule" id="MF_02068"/>
    </source>
</evidence>
<accession>Q8Y832</accession>
<protein>
    <recommendedName>
        <fullName evidence="1">Ribitol-5-phosphate cytidylyltransferase</fullName>
        <ecNumber evidence="1">2.7.7.40</ecNumber>
    </recommendedName>
</protein>
<gene>
    <name evidence="1" type="primary">tarI</name>
    <name type="ordered locus">lmo1086</name>
</gene>
<organism>
    <name type="scientific">Listeria monocytogenes serovar 1/2a (strain ATCC BAA-679 / EGD-e)</name>
    <dbReference type="NCBI Taxonomy" id="169963"/>
    <lineage>
        <taxon>Bacteria</taxon>
        <taxon>Bacillati</taxon>
        <taxon>Bacillota</taxon>
        <taxon>Bacilli</taxon>
        <taxon>Bacillales</taxon>
        <taxon>Listeriaceae</taxon>
        <taxon>Listeria</taxon>
    </lineage>
</organism>